<evidence type="ECO:0000250" key="1"/>
<evidence type="ECO:0000250" key="2">
    <source>
        <dbReference type="UniProtKB" id="Q10740"/>
    </source>
</evidence>
<evidence type="ECO:0000255" key="3">
    <source>
        <dbReference type="PROSITE-ProRule" id="PRU10095"/>
    </source>
</evidence>
<evidence type="ECO:0000305" key="4"/>
<gene>
    <name type="ORF">SCY_4744</name>
</gene>
<organism>
    <name type="scientific">Saccharomyces cerevisiae (strain YJM789)</name>
    <name type="common">Baker's yeast</name>
    <dbReference type="NCBI Taxonomy" id="307796"/>
    <lineage>
        <taxon>Eukaryota</taxon>
        <taxon>Fungi</taxon>
        <taxon>Dikarya</taxon>
        <taxon>Ascomycota</taxon>
        <taxon>Saccharomycotina</taxon>
        <taxon>Saccharomycetes</taxon>
        <taxon>Saccharomycetales</taxon>
        <taxon>Saccharomycetaceae</taxon>
        <taxon>Saccharomyces</taxon>
    </lineage>
</organism>
<feature type="chain" id="PRO_0000324943" description="Leucine aminopeptidase 2">
    <location>
        <begin position="1"/>
        <end position="671"/>
    </location>
</feature>
<feature type="active site" description="Proton acceptor" evidence="3">
    <location>
        <position position="341"/>
    </location>
</feature>
<feature type="active site" description="Proton donor" evidence="3">
    <location>
        <position position="429"/>
    </location>
</feature>
<feature type="binding site" evidence="1">
    <location>
        <begin position="184"/>
        <end position="186"/>
    </location>
    <ligand>
        <name>substrate</name>
    </ligand>
</feature>
<feature type="binding site" evidence="1">
    <location>
        <begin position="311"/>
        <end position="316"/>
    </location>
    <ligand>
        <name>substrate</name>
    </ligand>
</feature>
<feature type="binding site" evidence="3">
    <location>
        <position position="340"/>
    </location>
    <ligand>
        <name>Zn(2+)</name>
        <dbReference type="ChEBI" id="CHEBI:29105"/>
        <note>catalytic</note>
    </ligand>
</feature>
<feature type="binding site" evidence="3">
    <location>
        <position position="344"/>
    </location>
    <ligand>
        <name>Zn(2+)</name>
        <dbReference type="ChEBI" id="CHEBI:29105"/>
        <note>catalytic</note>
    </ligand>
</feature>
<feature type="binding site" evidence="3">
    <location>
        <position position="363"/>
    </location>
    <ligand>
        <name>Zn(2+)</name>
        <dbReference type="ChEBI" id="CHEBI:29105"/>
        <note>catalytic</note>
    </ligand>
</feature>
<proteinExistence type="inferred from homology"/>
<comment type="function">
    <text evidence="2">Aminopeptidase that preferentially cleaves di- and tripeptides. Also has low epoxide hydrolase activity (in vitro). Can hydrolyze the epoxide leukotriene LTA(4) but it forms preferentially 5,6-dihydroxy-7,9,11,14-eicosatetraenoic acid rather than the cytokine leukotriene B(4) as the product compared to the homologous mammalian enzyme (in vitro).</text>
</comment>
<comment type="catalytic activity">
    <reaction evidence="2">
        <text>an epoxide + H2O = an ethanediol</text>
        <dbReference type="Rhea" id="RHEA:19037"/>
        <dbReference type="ChEBI" id="CHEBI:15377"/>
        <dbReference type="ChEBI" id="CHEBI:32955"/>
        <dbReference type="ChEBI" id="CHEBI:140594"/>
        <dbReference type="EC" id="3.3.2.10"/>
    </reaction>
</comment>
<comment type="cofactor">
    <cofactor evidence="2">
        <name>Zn(2+)</name>
        <dbReference type="ChEBI" id="CHEBI:29105"/>
    </cofactor>
    <text evidence="2">Binds 1 zinc ion per subunit.</text>
</comment>
<comment type="activity regulation">
    <text evidence="2">Inhibited by 3-(4-benzyloxyphenyl)-2-(R)-amino-1-propanethiol (thioamine) and N-hydroxy-N-(2-(S)-amino-3-(4-benzyloxyphenyl)propyl)-5-carboxypen-tanamide (hydroxamic acid). The aminopeptidase activity is stimulated by LTA(4).</text>
</comment>
<comment type="subcellular location">
    <subcellularLocation>
        <location evidence="2">Cytoplasm</location>
    </subcellularLocation>
    <subcellularLocation>
        <location evidence="2">Nucleus</location>
    </subcellularLocation>
</comment>
<comment type="similarity">
    <text evidence="4">Belongs to the peptidase M1 family.</text>
</comment>
<protein>
    <recommendedName>
        <fullName>Leucine aminopeptidase 2</fullName>
        <ecNumber>3.4.11.-</ecNumber>
    </recommendedName>
    <alternativeName>
        <fullName>Epoxide hydrolase</fullName>
        <ecNumber>3.3.2.10</ecNumber>
    </alternativeName>
    <alternativeName>
        <fullName>Leukotriene A-4 hydrolase homolog</fullName>
        <shortName>LTA-4 hydrolase</shortName>
    </alternativeName>
</protein>
<name>LKHA4_YEAS7</name>
<keyword id="KW-0963">Cytoplasm</keyword>
<keyword id="KW-0378">Hydrolase</keyword>
<keyword id="KW-0479">Metal-binding</keyword>
<keyword id="KW-0482">Metalloprotease</keyword>
<keyword id="KW-0539">Nucleus</keyword>
<keyword id="KW-0645">Protease</keyword>
<keyword id="KW-0862">Zinc</keyword>
<reference key="1">
    <citation type="journal article" date="2007" name="Proc. Natl. Acad. Sci. U.S.A.">
        <title>Genome sequencing and comparative analysis of Saccharomyces cerevisiae strain YJM789.</title>
        <authorList>
            <person name="Wei W."/>
            <person name="McCusker J.H."/>
            <person name="Hyman R.W."/>
            <person name="Jones T."/>
            <person name="Ning Y."/>
            <person name="Cao Z."/>
            <person name="Gu Z."/>
            <person name="Bruno D."/>
            <person name="Miranda M."/>
            <person name="Nguyen M."/>
            <person name="Wilhelmy J."/>
            <person name="Komp C."/>
            <person name="Tamse R."/>
            <person name="Wang X."/>
            <person name="Jia P."/>
            <person name="Luedi P."/>
            <person name="Oefner P.J."/>
            <person name="David L."/>
            <person name="Dietrich F.S."/>
            <person name="Li Y."/>
            <person name="Davis R.W."/>
            <person name="Steinmetz L.M."/>
        </authorList>
    </citation>
    <scope>NUCLEOTIDE SEQUENCE [LARGE SCALE GENOMIC DNA]</scope>
    <source>
        <strain>YJM789</strain>
    </source>
</reference>
<sequence>MFLLPFVIRHSSSIYLPTLRFRGLLTVISRNIHISTPHKMLPLSIEQRRPSRSPEYDQSTLSNYKDFAVLHTDLNLSVSFEKSAISGSVTFQLKKLHEGKNKSDELHLDTSYLDVQEVHIDGSKADFQIEQRKEPLGSRLVINNASCNDNFTLNIQFRTTDKCTALQWLNSKQTKGGKPYVFSQLEAIHARSLFPCFDTPSVKSTFTASIESPLPVVFSGIRIEDTSKDTNIYRFEQKVPIPAYLIGIASGDLSSAPIGPRSTVYTEPFRLKDCQWEFENDVEKFIQTAEKIIFEYEWGTYDILVNVDSYPYGGMESPNMTFATPTLIAHDRSNIDVIAHELAHSWSGNLVTNCSWNHFWLNEGWTVYLERRIIGAIHGEPTRHFSALIGWSDLQNSIDSMKDPERFSTLVQNLNDNTDPDDAFSTVPYEKGFNLLFHLETILGGKAEFDPFIRHYFKKFAKKSLDTFQFLDTLYEFYPEKKEILDSVDWETWLYKPGMPPRPHFITALADNVYQLADKWVEMAQHLKTTEDFRSEFNAIDIKDFNSNQLVLFLETLTQNGHSNKKPKDFDWAKFPVASRALLDIYQDNIVKSQNAEVVFKMFKFQIFAKLQEEYKHLADWLGTVGRMKFVRPGYRLLNSVDRRLALATFDKFKDTYHPICKALVKQDLGL</sequence>
<accession>A6ZS33</accession>
<dbReference type="EC" id="3.4.11.-"/>
<dbReference type="EC" id="3.3.2.10"/>
<dbReference type="EMBL" id="AAFW02000067">
    <property type="protein sequence ID" value="EDN62765.1"/>
    <property type="molecule type" value="Genomic_DNA"/>
</dbReference>
<dbReference type="SMR" id="A6ZS33"/>
<dbReference type="MEROPS" id="M01.034"/>
<dbReference type="HOGENOM" id="CLU_014505_1_1_1"/>
<dbReference type="Proteomes" id="UP000007060">
    <property type="component" value="Unassembled WGS sequence"/>
</dbReference>
<dbReference type="GO" id="GO:0005829">
    <property type="term" value="C:cytosol"/>
    <property type="evidence" value="ECO:0007669"/>
    <property type="project" value="TreeGrafter"/>
</dbReference>
<dbReference type="GO" id="GO:0005634">
    <property type="term" value="C:nucleus"/>
    <property type="evidence" value="ECO:0007669"/>
    <property type="project" value="UniProtKB-SubCell"/>
</dbReference>
<dbReference type="GO" id="GO:0004177">
    <property type="term" value="F:aminopeptidase activity"/>
    <property type="evidence" value="ECO:0000250"/>
    <property type="project" value="UniProtKB"/>
</dbReference>
<dbReference type="GO" id="GO:0004301">
    <property type="term" value="F:epoxide hydrolase activity"/>
    <property type="evidence" value="ECO:0000250"/>
    <property type="project" value="UniProtKB"/>
</dbReference>
<dbReference type="GO" id="GO:0008237">
    <property type="term" value="F:metallopeptidase activity"/>
    <property type="evidence" value="ECO:0007669"/>
    <property type="project" value="UniProtKB-KW"/>
</dbReference>
<dbReference type="GO" id="GO:0008270">
    <property type="term" value="F:zinc ion binding"/>
    <property type="evidence" value="ECO:0000250"/>
    <property type="project" value="UniProtKB"/>
</dbReference>
<dbReference type="GO" id="GO:0043171">
    <property type="term" value="P:peptide catabolic process"/>
    <property type="evidence" value="ECO:0000250"/>
    <property type="project" value="UniProtKB"/>
</dbReference>
<dbReference type="GO" id="GO:0006508">
    <property type="term" value="P:proteolysis"/>
    <property type="evidence" value="ECO:0007669"/>
    <property type="project" value="UniProtKB-KW"/>
</dbReference>
<dbReference type="CDD" id="cd09599">
    <property type="entry name" value="M1_LTA4H"/>
    <property type="match status" value="1"/>
</dbReference>
<dbReference type="FunFam" id="1.10.390.10:FF:000009">
    <property type="entry name" value="Leukotriene A(4) hydrolase"/>
    <property type="match status" value="1"/>
</dbReference>
<dbReference type="FunFam" id="1.25.40.320:FF:000001">
    <property type="entry name" value="Leukotriene A(4) hydrolase"/>
    <property type="match status" value="1"/>
</dbReference>
<dbReference type="FunFam" id="2.60.40.1730:FF:000004">
    <property type="entry name" value="Leukotriene A(4) hydrolase"/>
    <property type="match status" value="1"/>
</dbReference>
<dbReference type="FunFam" id="3.30.2010.30:FF:000001">
    <property type="entry name" value="Leukotriene A(4) hydrolase"/>
    <property type="match status" value="1"/>
</dbReference>
<dbReference type="Gene3D" id="3.30.2010.30">
    <property type="match status" value="1"/>
</dbReference>
<dbReference type="Gene3D" id="1.10.390.10">
    <property type="entry name" value="Neutral Protease Domain 2"/>
    <property type="match status" value="1"/>
</dbReference>
<dbReference type="Gene3D" id="1.25.40.320">
    <property type="entry name" value="Peptidase M1, leukotriene A4 hydrolase/aminopeptidase C-terminal domain"/>
    <property type="match status" value="1"/>
</dbReference>
<dbReference type="Gene3D" id="2.60.40.1730">
    <property type="entry name" value="tricorn interacting facor f3 domain"/>
    <property type="match status" value="1"/>
</dbReference>
<dbReference type="InterPro" id="IPR045357">
    <property type="entry name" value="Aminopeptidase_N-like_N"/>
</dbReference>
<dbReference type="InterPro" id="IPR042097">
    <property type="entry name" value="Aminopeptidase_N-like_N_sf"/>
</dbReference>
<dbReference type="InterPro" id="IPR016024">
    <property type="entry name" value="ARM-type_fold"/>
</dbReference>
<dbReference type="InterPro" id="IPR012777">
    <property type="entry name" value="LTA4H"/>
</dbReference>
<dbReference type="InterPro" id="IPR049980">
    <property type="entry name" value="LTA4H_cat"/>
</dbReference>
<dbReference type="InterPro" id="IPR038502">
    <property type="entry name" value="M1_LTA-4_hydro/amino_C_sf"/>
</dbReference>
<dbReference type="InterPro" id="IPR034015">
    <property type="entry name" value="M1_LTA4H"/>
</dbReference>
<dbReference type="InterPro" id="IPR001930">
    <property type="entry name" value="Peptidase_M1"/>
</dbReference>
<dbReference type="InterPro" id="IPR015211">
    <property type="entry name" value="Peptidase_M1_C"/>
</dbReference>
<dbReference type="InterPro" id="IPR014782">
    <property type="entry name" value="Peptidase_M1_dom"/>
</dbReference>
<dbReference type="InterPro" id="IPR027268">
    <property type="entry name" value="Peptidase_M4/M1_CTD_sf"/>
</dbReference>
<dbReference type="NCBIfam" id="TIGR02411">
    <property type="entry name" value="leuko_A4_hydro"/>
    <property type="match status" value="1"/>
</dbReference>
<dbReference type="PANTHER" id="PTHR45726">
    <property type="entry name" value="LEUKOTRIENE A-4 HYDROLASE"/>
    <property type="match status" value="1"/>
</dbReference>
<dbReference type="PANTHER" id="PTHR45726:SF3">
    <property type="entry name" value="LEUKOTRIENE A-4 HYDROLASE"/>
    <property type="match status" value="1"/>
</dbReference>
<dbReference type="Pfam" id="PF09127">
    <property type="entry name" value="Leuk-A4-hydro_C"/>
    <property type="match status" value="1"/>
</dbReference>
<dbReference type="Pfam" id="PF01433">
    <property type="entry name" value="Peptidase_M1"/>
    <property type="match status" value="1"/>
</dbReference>
<dbReference type="Pfam" id="PF17900">
    <property type="entry name" value="Peptidase_M1_N"/>
    <property type="match status" value="1"/>
</dbReference>
<dbReference type="PRINTS" id="PR00756">
    <property type="entry name" value="ALADIPTASE"/>
</dbReference>
<dbReference type="SMART" id="SM01263">
    <property type="entry name" value="Leuk-A4-hydro_C"/>
    <property type="match status" value="1"/>
</dbReference>
<dbReference type="SUPFAM" id="SSF48371">
    <property type="entry name" value="ARM repeat"/>
    <property type="match status" value="1"/>
</dbReference>
<dbReference type="SUPFAM" id="SSF63737">
    <property type="entry name" value="Leukotriene A4 hydrolase N-terminal domain"/>
    <property type="match status" value="1"/>
</dbReference>
<dbReference type="SUPFAM" id="SSF55486">
    <property type="entry name" value="Metalloproteases ('zincins'), catalytic domain"/>
    <property type="match status" value="1"/>
</dbReference>
<dbReference type="PROSITE" id="PS00142">
    <property type="entry name" value="ZINC_PROTEASE"/>
    <property type="match status" value="1"/>
</dbReference>